<organism>
    <name type="scientific">Cyanidium caldarium</name>
    <name type="common">Red alga</name>
    <dbReference type="NCBI Taxonomy" id="2771"/>
    <lineage>
        <taxon>Eukaryota</taxon>
        <taxon>Rhodophyta</taxon>
        <taxon>Bangiophyceae</taxon>
        <taxon>Cyanidiales</taxon>
        <taxon>Cyanidiaceae</taxon>
        <taxon>Cyanidium</taxon>
    </lineage>
</organism>
<gene>
    <name evidence="1" type="primary">secA</name>
</gene>
<dbReference type="EC" id="7.4.2.8" evidence="1"/>
<dbReference type="EMBL" id="AF022186">
    <property type="protein sequence ID" value="AAB82678.1"/>
    <property type="molecule type" value="Genomic_DNA"/>
</dbReference>
<dbReference type="PIR" id="T11979">
    <property type="entry name" value="T11979"/>
</dbReference>
<dbReference type="RefSeq" id="NP_045083.1">
    <property type="nucleotide sequence ID" value="NC_001840.1"/>
</dbReference>
<dbReference type="SMR" id="O19911"/>
<dbReference type="GeneID" id="800260"/>
<dbReference type="GO" id="GO:0009570">
    <property type="term" value="C:chloroplast stroma"/>
    <property type="evidence" value="ECO:0007669"/>
    <property type="project" value="UniProtKB-SubCell"/>
</dbReference>
<dbReference type="GO" id="GO:0009535">
    <property type="term" value="C:chloroplast thylakoid membrane"/>
    <property type="evidence" value="ECO:0007669"/>
    <property type="project" value="UniProtKB-SubCell"/>
</dbReference>
<dbReference type="GO" id="GO:0005524">
    <property type="term" value="F:ATP binding"/>
    <property type="evidence" value="ECO:0007669"/>
    <property type="project" value="UniProtKB-UniRule"/>
</dbReference>
<dbReference type="GO" id="GO:0008564">
    <property type="term" value="F:protein-exporting ATPase activity"/>
    <property type="evidence" value="ECO:0007669"/>
    <property type="project" value="UniProtKB-EC"/>
</dbReference>
<dbReference type="GO" id="GO:0065002">
    <property type="term" value="P:intracellular protein transmembrane transport"/>
    <property type="evidence" value="ECO:0007669"/>
    <property type="project" value="UniProtKB-UniRule"/>
</dbReference>
<dbReference type="GO" id="GO:0017038">
    <property type="term" value="P:protein import"/>
    <property type="evidence" value="ECO:0007669"/>
    <property type="project" value="InterPro"/>
</dbReference>
<dbReference type="GO" id="GO:0006605">
    <property type="term" value="P:protein targeting"/>
    <property type="evidence" value="ECO:0007669"/>
    <property type="project" value="UniProtKB-UniRule"/>
</dbReference>
<dbReference type="CDD" id="cd17928">
    <property type="entry name" value="DEXDc_SecA"/>
    <property type="match status" value="1"/>
</dbReference>
<dbReference type="CDD" id="cd18803">
    <property type="entry name" value="SF2_C_secA"/>
    <property type="match status" value="1"/>
</dbReference>
<dbReference type="FunFam" id="3.90.1440.10:FF:000003">
    <property type="entry name" value="Preprotein translocase SecA subunit"/>
    <property type="match status" value="1"/>
</dbReference>
<dbReference type="FunFam" id="3.40.50.300:FF:000429">
    <property type="entry name" value="Preprotein translocase subunit SecA"/>
    <property type="match status" value="1"/>
</dbReference>
<dbReference type="Gene3D" id="1.10.3060.10">
    <property type="entry name" value="Helical scaffold and wing domains of SecA"/>
    <property type="match status" value="1"/>
</dbReference>
<dbReference type="Gene3D" id="3.40.50.300">
    <property type="entry name" value="P-loop containing nucleotide triphosphate hydrolases"/>
    <property type="match status" value="2"/>
</dbReference>
<dbReference type="Gene3D" id="3.90.1440.10">
    <property type="entry name" value="SecA, preprotein cross-linking domain"/>
    <property type="match status" value="1"/>
</dbReference>
<dbReference type="HAMAP" id="MF_01382">
    <property type="entry name" value="SecA"/>
    <property type="match status" value="1"/>
</dbReference>
<dbReference type="InterPro" id="IPR014001">
    <property type="entry name" value="Helicase_ATP-bd"/>
</dbReference>
<dbReference type="InterPro" id="IPR027417">
    <property type="entry name" value="P-loop_NTPase"/>
</dbReference>
<dbReference type="InterPro" id="IPR000185">
    <property type="entry name" value="SecA"/>
</dbReference>
<dbReference type="InterPro" id="IPR020937">
    <property type="entry name" value="SecA_CS"/>
</dbReference>
<dbReference type="InterPro" id="IPR011115">
    <property type="entry name" value="SecA_DEAD"/>
</dbReference>
<dbReference type="InterPro" id="IPR014018">
    <property type="entry name" value="SecA_motor_DEAD"/>
</dbReference>
<dbReference type="InterPro" id="IPR011130">
    <property type="entry name" value="SecA_preprotein_X-link_dom"/>
</dbReference>
<dbReference type="InterPro" id="IPR044722">
    <property type="entry name" value="SecA_SF2_C"/>
</dbReference>
<dbReference type="InterPro" id="IPR011116">
    <property type="entry name" value="SecA_Wing/Scaffold"/>
</dbReference>
<dbReference type="InterPro" id="IPR036266">
    <property type="entry name" value="SecA_Wing/Scaffold_sf"/>
</dbReference>
<dbReference type="InterPro" id="IPR036670">
    <property type="entry name" value="SecA_X-link_sf"/>
</dbReference>
<dbReference type="NCBIfam" id="NF009538">
    <property type="entry name" value="PRK12904.1"/>
    <property type="match status" value="1"/>
</dbReference>
<dbReference type="NCBIfam" id="TIGR00963">
    <property type="entry name" value="secA"/>
    <property type="match status" value="1"/>
</dbReference>
<dbReference type="PANTHER" id="PTHR30612:SF0">
    <property type="entry name" value="CHLOROPLAST PROTEIN-TRANSPORTING ATPASE"/>
    <property type="match status" value="1"/>
</dbReference>
<dbReference type="PANTHER" id="PTHR30612">
    <property type="entry name" value="SECA INNER MEMBRANE COMPONENT OF SEC PROTEIN SECRETION SYSTEM"/>
    <property type="match status" value="1"/>
</dbReference>
<dbReference type="Pfam" id="PF21090">
    <property type="entry name" value="P-loop_SecA"/>
    <property type="match status" value="1"/>
</dbReference>
<dbReference type="Pfam" id="PF07517">
    <property type="entry name" value="SecA_DEAD"/>
    <property type="match status" value="1"/>
</dbReference>
<dbReference type="Pfam" id="PF01043">
    <property type="entry name" value="SecA_PP_bind"/>
    <property type="match status" value="1"/>
</dbReference>
<dbReference type="Pfam" id="PF07516">
    <property type="entry name" value="SecA_SW"/>
    <property type="match status" value="1"/>
</dbReference>
<dbReference type="PRINTS" id="PR00906">
    <property type="entry name" value="SECA"/>
</dbReference>
<dbReference type="SMART" id="SM00957">
    <property type="entry name" value="SecA_DEAD"/>
    <property type="match status" value="1"/>
</dbReference>
<dbReference type="SMART" id="SM00958">
    <property type="entry name" value="SecA_PP_bind"/>
    <property type="match status" value="1"/>
</dbReference>
<dbReference type="SUPFAM" id="SSF81886">
    <property type="entry name" value="Helical scaffold and wing domains of SecA"/>
    <property type="match status" value="1"/>
</dbReference>
<dbReference type="SUPFAM" id="SSF52540">
    <property type="entry name" value="P-loop containing nucleoside triphosphate hydrolases"/>
    <property type="match status" value="2"/>
</dbReference>
<dbReference type="SUPFAM" id="SSF81767">
    <property type="entry name" value="Pre-protein crosslinking domain of SecA"/>
    <property type="match status" value="1"/>
</dbReference>
<dbReference type="PROSITE" id="PS01312">
    <property type="entry name" value="SECA"/>
    <property type="match status" value="1"/>
</dbReference>
<dbReference type="PROSITE" id="PS51196">
    <property type="entry name" value="SECA_MOTOR_DEAD"/>
    <property type="match status" value="1"/>
</dbReference>
<keyword id="KW-0067">ATP-binding</keyword>
<keyword id="KW-0150">Chloroplast</keyword>
<keyword id="KW-0472">Membrane</keyword>
<keyword id="KW-0547">Nucleotide-binding</keyword>
<keyword id="KW-0934">Plastid</keyword>
<keyword id="KW-0653">Protein transport</keyword>
<keyword id="KW-0793">Thylakoid</keyword>
<keyword id="KW-1278">Translocase</keyword>
<keyword id="KW-0811">Translocation</keyword>
<keyword id="KW-0813">Transport</keyword>
<geneLocation type="chloroplast"/>
<name>SECA_CYACA</name>
<reference key="1">
    <citation type="journal article" date="2000" name="J. Mol. Evol.">
        <title>The structure and gene repertoire of an ancient red algal plastid genome.</title>
        <authorList>
            <person name="Gloeckner G."/>
            <person name="Rosenthal A."/>
            <person name="Valentin K.-U."/>
        </authorList>
    </citation>
    <scope>NUCLEOTIDE SEQUENCE [LARGE SCALE GENOMIC DNA]</scope>
    <source>
        <strain>RK-1</strain>
    </source>
</reference>
<sequence length="895" mass="103754">MTIYLCIAFNMVNTYIDYLRLRKYWKILNQIKKHREEIKQLTNNCLKIKTTEFKKRIKSGISLDQILPETFAVASEAAERVLGLNPYDVQMIGGIVLHEGKIAEMKTGEGKSLAASFPAYLNALTEKGVHIITVNDYLARRDYESIGKIFEFLGMKVGLINQYTPISKRKNNYLADITYVTNSEIGFDYLRDNMATQIKELTQRPFHFCIIDEVDSILIDESRTPLIISGRTKTRKDKYELAHRLANFLKKSIHYKIDEKNRTIILSDLGVITCEKILKIKSIYSAQNTWAHFIYNALKAKELYLKNVHYIVRDQQAIIVDEFTGRIMPERRWADGLHQSIEAKENLQIKEETKTLASITYQNLFLLYLKISGMTGTAKTEENELISIYSLPVICIPTYKSMIRKDLPDLIFQTEIEKLKAVTEECVKMHLLGRPILVGTTNIQKSEILSQLLNQYQIRHNLLNAKPQNVKRESEIIAQAGRKYAVTISTNMAGRGTDIILGGNLEYIIKNKITSLFKPIILTGNTQYIIIDKSLKSSGNEIRDINSNILKIINLHRQNPKLTIAEFGNSLNIASKKIKSNNEYILNLRSIYIIFENIYKKYFDIESKEVKNIGGLCVIGTERHESRRIDNQLRGRSGRQGDVGSSIFFISLEDNLLRIFGGERISKMMHTFMPSVNEPIQSPLLSRSLDSAQKKVESLHYNFRKQLFQYDQILNSQRKAIYLERRLILESNEIVAWTMAYMELTIIDILNDQYLYSHRKPRDKVLKNINKIYDLLASPISLIKIEKYTFNKKTILKQLKISYDLKKAQIDKTSCGLMKSLERSLILEQIDTNWSEHIQQMSFLKEFIGWRGYAQKDPLIEYKNESYILFIKMIRTIRQNILYLLFRAEPTLDFS</sequence>
<feature type="chain" id="PRO_0000109621" description="Protein translocase subunit SecA">
    <location>
        <begin position="1"/>
        <end position="895"/>
    </location>
</feature>
<feature type="binding site" evidence="1">
    <location>
        <position position="90"/>
    </location>
    <ligand>
        <name>ATP</name>
        <dbReference type="ChEBI" id="CHEBI:30616"/>
    </ligand>
</feature>
<feature type="binding site" evidence="1">
    <location>
        <begin position="108"/>
        <end position="112"/>
    </location>
    <ligand>
        <name>ATP</name>
        <dbReference type="ChEBI" id="CHEBI:30616"/>
    </ligand>
</feature>
<feature type="binding site" evidence="1">
    <location>
        <position position="498"/>
    </location>
    <ligand>
        <name>ATP</name>
        <dbReference type="ChEBI" id="CHEBI:30616"/>
    </ligand>
</feature>
<evidence type="ECO:0000255" key="1">
    <source>
        <dbReference type="HAMAP-Rule" id="MF_01382"/>
    </source>
</evidence>
<accession>O19911</accession>
<proteinExistence type="inferred from homology"/>
<comment type="function">
    <text evidence="1">Has a central role in coupling the hydrolysis of ATP to the transfer of proteins across the thylakoid membrane.</text>
</comment>
<comment type="catalytic activity">
    <reaction evidence="1">
        <text>ATP + H2O + cellular proteinSide 1 = ADP + phosphate + cellular proteinSide 2.</text>
        <dbReference type="EC" id="7.4.2.8"/>
    </reaction>
</comment>
<comment type="subcellular location">
    <subcellularLocation>
        <location evidence="1">Plastid</location>
        <location evidence="1">Chloroplast stroma</location>
    </subcellularLocation>
    <subcellularLocation>
        <location evidence="1">Plastid</location>
        <location evidence="1">Chloroplast thylakoid membrane</location>
        <topology evidence="1">Peripheral membrane protein</topology>
    </subcellularLocation>
    <text evidence="1">A minor fraction is associated with the chloroplast thylakoid membrane.</text>
</comment>
<comment type="similarity">
    <text evidence="1">Belongs to the SecA family.</text>
</comment>
<protein>
    <recommendedName>
        <fullName evidence="1">Protein translocase subunit SecA</fullName>
        <ecNumber evidence="1">7.4.2.8</ecNumber>
    </recommendedName>
</protein>